<feature type="chain" id="PRO_0000187421" description="Large ribosomal subunit protein bL34">
    <location>
        <begin position="1"/>
        <end position="47"/>
    </location>
</feature>
<feature type="sequence conflict" description="In Ref. 1; AAB53140." evidence="1" ref="1">
    <original>A</original>
    <variation>R</variation>
    <location>
        <position position="2"/>
    </location>
</feature>
<dbReference type="EMBL" id="L39923">
    <property type="protein sequence ID" value="AAB53140.1"/>
    <property type="molecule type" value="Genomic_DNA"/>
</dbReference>
<dbReference type="EMBL" id="AL583926">
    <property type="protein sequence ID" value="CAC32245.1"/>
    <property type="molecule type" value="Genomic_DNA"/>
</dbReference>
<dbReference type="PIR" id="G87248">
    <property type="entry name" value="G87248"/>
</dbReference>
<dbReference type="RefSeq" id="NP_302733.1">
    <property type="nucleotide sequence ID" value="NC_002677.1"/>
</dbReference>
<dbReference type="RefSeq" id="WP_010909051.1">
    <property type="nucleotide sequence ID" value="NC_002677.1"/>
</dbReference>
<dbReference type="SMR" id="P46386"/>
<dbReference type="STRING" id="272631.gene:17576579"/>
<dbReference type="KEGG" id="mle:ML2713"/>
<dbReference type="PATRIC" id="fig|272631.5.peg.5215"/>
<dbReference type="Leproma" id="ML2713"/>
<dbReference type="eggNOG" id="COG0230">
    <property type="taxonomic scope" value="Bacteria"/>
</dbReference>
<dbReference type="HOGENOM" id="CLU_129938_2_1_11"/>
<dbReference type="OrthoDB" id="9804832at2"/>
<dbReference type="Proteomes" id="UP000000806">
    <property type="component" value="Chromosome"/>
</dbReference>
<dbReference type="GO" id="GO:1990904">
    <property type="term" value="C:ribonucleoprotein complex"/>
    <property type="evidence" value="ECO:0007669"/>
    <property type="project" value="UniProtKB-KW"/>
</dbReference>
<dbReference type="GO" id="GO:0005840">
    <property type="term" value="C:ribosome"/>
    <property type="evidence" value="ECO:0007669"/>
    <property type="project" value="UniProtKB-KW"/>
</dbReference>
<dbReference type="GO" id="GO:0003735">
    <property type="term" value="F:structural constituent of ribosome"/>
    <property type="evidence" value="ECO:0007669"/>
    <property type="project" value="InterPro"/>
</dbReference>
<dbReference type="GO" id="GO:0006412">
    <property type="term" value="P:translation"/>
    <property type="evidence" value="ECO:0007669"/>
    <property type="project" value="UniProtKB-UniRule"/>
</dbReference>
<dbReference type="FunFam" id="1.10.287.3980:FF:000001">
    <property type="entry name" value="Mitochondrial ribosomal protein L34"/>
    <property type="match status" value="1"/>
</dbReference>
<dbReference type="Gene3D" id="1.10.287.3980">
    <property type="match status" value="1"/>
</dbReference>
<dbReference type="HAMAP" id="MF_00391">
    <property type="entry name" value="Ribosomal_bL34"/>
    <property type="match status" value="1"/>
</dbReference>
<dbReference type="InterPro" id="IPR000271">
    <property type="entry name" value="Ribosomal_bL34"/>
</dbReference>
<dbReference type="InterPro" id="IPR020939">
    <property type="entry name" value="Ribosomal_bL34_CS"/>
</dbReference>
<dbReference type="NCBIfam" id="TIGR01030">
    <property type="entry name" value="rpmH_bact"/>
    <property type="match status" value="1"/>
</dbReference>
<dbReference type="PANTHER" id="PTHR14503:SF4">
    <property type="entry name" value="LARGE RIBOSOMAL SUBUNIT PROTEIN BL34M"/>
    <property type="match status" value="1"/>
</dbReference>
<dbReference type="PANTHER" id="PTHR14503">
    <property type="entry name" value="MITOCHONDRIAL RIBOSOMAL PROTEIN 34 FAMILY MEMBER"/>
    <property type="match status" value="1"/>
</dbReference>
<dbReference type="Pfam" id="PF00468">
    <property type="entry name" value="Ribosomal_L34"/>
    <property type="match status" value="1"/>
</dbReference>
<dbReference type="PROSITE" id="PS00784">
    <property type="entry name" value="RIBOSOMAL_L34"/>
    <property type="match status" value="1"/>
</dbReference>
<reference key="1">
    <citation type="journal article" date="1996" name="Microbiology">
        <title>Gene arrangement and organization in an approximately 76 kb fragment encompassing the oriC region of the chromosome of Mycobacterium leprae.</title>
        <authorList>
            <person name="Fsihi H."/>
            <person name="de Rossi E."/>
            <person name="Salazar L."/>
            <person name="Cantoni R."/>
            <person name="Labo M."/>
            <person name="Riccardi G."/>
            <person name="Takiff H.E."/>
            <person name="Eiglmeier K."/>
            <person name="Bergh S."/>
            <person name="Cole S.T."/>
        </authorList>
    </citation>
    <scope>NUCLEOTIDE SEQUENCE [GENOMIC DNA]</scope>
</reference>
<reference key="2">
    <citation type="journal article" date="2001" name="Nature">
        <title>Massive gene decay in the leprosy bacillus.</title>
        <authorList>
            <person name="Cole S.T."/>
            <person name="Eiglmeier K."/>
            <person name="Parkhill J."/>
            <person name="James K.D."/>
            <person name="Thomson N.R."/>
            <person name="Wheeler P.R."/>
            <person name="Honore N."/>
            <person name="Garnier T."/>
            <person name="Churcher C.M."/>
            <person name="Harris D.E."/>
            <person name="Mungall K.L."/>
            <person name="Basham D."/>
            <person name="Brown D."/>
            <person name="Chillingworth T."/>
            <person name="Connor R."/>
            <person name="Davies R.M."/>
            <person name="Devlin K."/>
            <person name="Duthoy S."/>
            <person name="Feltwell T."/>
            <person name="Fraser A."/>
            <person name="Hamlin N."/>
            <person name="Holroyd S."/>
            <person name="Hornsby T."/>
            <person name="Jagels K."/>
            <person name="Lacroix C."/>
            <person name="Maclean J."/>
            <person name="Moule S."/>
            <person name="Murphy L.D."/>
            <person name="Oliver K."/>
            <person name="Quail M.A."/>
            <person name="Rajandream M.A."/>
            <person name="Rutherford K.M."/>
            <person name="Rutter S."/>
            <person name="Seeger K."/>
            <person name="Simon S."/>
            <person name="Simmonds M."/>
            <person name="Skelton J."/>
            <person name="Squares R."/>
            <person name="Squares S."/>
            <person name="Stevens K."/>
            <person name="Taylor K."/>
            <person name="Whitehead S."/>
            <person name="Woodward J.R."/>
            <person name="Barrell B.G."/>
        </authorList>
    </citation>
    <scope>NUCLEOTIDE SEQUENCE [LARGE SCALE GENOMIC DNA]</scope>
    <source>
        <strain>TN</strain>
    </source>
</reference>
<comment type="similarity">
    <text evidence="1">Belongs to the bacterial ribosomal protein bL34 family.</text>
</comment>
<proteinExistence type="inferred from homology"/>
<evidence type="ECO:0000305" key="1"/>
<keyword id="KW-1185">Reference proteome</keyword>
<keyword id="KW-0687">Ribonucleoprotein</keyword>
<keyword id="KW-0689">Ribosomal protein</keyword>
<name>RL34_MYCLE</name>
<accession>P46386</accession>
<gene>
    <name type="primary">rpmH</name>
    <name type="ordered locus">ML2713</name>
</gene>
<sequence length="47" mass="5637">MAKGKRTFQPNNRRRARVHGFRLRMRTRAGRSIVSDRRRKGRRTLTA</sequence>
<organism>
    <name type="scientific">Mycobacterium leprae (strain TN)</name>
    <dbReference type="NCBI Taxonomy" id="272631"/>
    <lineage>
        <taxon>Bacteria</taxon>
        <taxon>Bacillati</taxon>
        <taxon>Actinomycetota</taxon>
        <taxon>Actinomycetes</taxon>
        <taxon>Mycobacteriales</taxon>
        <taxon>Mycobacteriaceae</taxon>
        <taxon>Mycobacterium</taxon>
    </lineage>
</organism>
<protein>
    <recommendedName>
        <fullName evidence="1">Large ribosomal subunit protein bL34</fullName>
    </recommendedName>
    <alternativeName>
        <fullName>50S ribosomal protein L34</fullName>
    </alternativeName>
</protein>